<comment type="similarity">
    <text evidence="1">Belongs to the UPF0371 family.</text>
</comment>
<sequence>MKKQAFSSEQYLNLQRDHILERINQFDGKLYLEFGGKMLEDFHAARVLPGYEPDNKIKLLQELKEQVEVVIAINASNIEHSKARGDLGISYDQEVLRLIDKFNELGIFVGSVVITQYAGQPAADAFRNQLEKNGIDSYLHYPIKGYPTDMDHIISPEGMGKNDYIKTSRNLIVVTAPGPGSGKLATCMSNMYHDQINGIKSGYAKFETFPVWNLPLHHPVNLAYEAATADLDDVNMIDPFHLQTYGETTVNYNRDIEIFPVLKRMLERILGKSPYASPTDMGVNMVGFAITDDEAAVEASKQEIIRRYYQTVLDFKAEKVGEAAVKKIELLMNDLGITPADRKVAVVARQKAEETGGPALALELPNGDIVTGKNSELFGPTAAALINAIKKSADIAKEVKLIEPEVVKPIQGLKIDHLGSRNPRLHSNEILIALAITATENPDAARAMEELGNLKGSEAHSTIILTDEDKNVLRKLGINVTFDPYYQYDRLYRK</sequence>
<name>Y310_STRP4</name>
<protein>
    <recommendedName>
        <fullName evidence="1">UPF0371 protein SPG_0310</fullName>
    </recommendedName>
</protein>
<reference key="1">
    <citation type="journal article" date="2001" name="Microb. Drug Resist.">
        <title>Annotated draft genomic sequence from a Streptococcus pneumoniae type 19F clinical isolate.</title>
        <authorList>
            <person name="Dopazo J."/>
            <person name="Mendoza A."/>
            <person name="Herrero J."/>
            <person name="Caldara F."/>
            <person name="Humbert Y."/>
            <person name="Friedli L."/>
            <person name="Guerrier M."/>
            <person name="Grand-Schenk E."/>
            <person name="Gandin C."/>
            <person name="de Francesco M."/>
            <person name="Polissi A."/>
            <person name="Buell G."/>
            <person name="Feger G."/>
            <person name="Garcia E."/>
            <person name="Peitsch M."/>
            <person name="Garcia-Bustos J.F."/>
        </authorList>
    </citation>
    <scope>NUCLEOTIDE SEQUENCE [LARGE SCALE GENOMIC DNA]</scope>
    <source>
        <strain>G54</strain>
    </source>
</reference>
<reference key="2">
    <citation type="submission" date="2008-03" db="EMBL/GenBank/DDBJ databases">
        <title>Pneumococcal beta glucoside metabolism investigated by whole genome comparison.</title>
        <authorList>
            <person name="Mulas L."/>
            <person name="Trappetti C."/>
            <person name="Hakenbeck R."/>
            <person name="Iannelli F."/>
            <person name="Pozzi G."/>
            <person name="Davidsen T.M."/>
            <person name="Tettelin H."/>
            <person name="Oggioni M."/>
        </authorList>
    </citation>
    <scope>NUCLEOTIDE SEQUENCE [LARGE SCALE GENOMIC DNA]</scope>
    <source>
        <strain>G54</strain>
    </source>
</reference>
<gene>
    <name type="ordered locus">SPG_0310</name>
</gene>
<accession>B5E785</accession>
<dbReference type="EMBL" id="CP001015">
    <property type="protein sequence ID" value="ACF56783.1"/>
    <property type="molecule type" value="Genomic_DNA"/>
</dbReference>
<dbReference type="SMR" id="B5E785"/>
<dbReference type="KEGG" id="spx:SPG_0310"/>
<dbReference type="HOGENOM" id="CLU_046981_0_0_9"/>
<dbReference type="Gene3D" id="1.20.1570.10">
    <property type="entry name" value="dip2346 domain like"/>
    <property type="match status" value="1"/>
</dbReference>
<dbReference type="Gene3D" id="3.10.630.10">
    <property type="entry name" value="dip2346 domain like"/>
    <property type="match status" value="1"/>
</dbReference>
<dbReference type="Gene3D" id="3.40.140.40">
    <property type="entry name" value="Domain of unknown function (DUF1846), C-terminal subdomain"/>
    <property type="match status" value="1"/>
</dbReference>
<dbReference type="HAMAP" id="MF_01567">
    <property type="entry name" value="UPF0371"/>
    <property type="match status" value="1"/>
</dbReference>
<dbReference type="InterPro" id="IPR014999">
    <property type="entry name" value="DUF1846"/>
</dbReference>
<dbReference type="InterPro" id="IPR048441">
    <property type="entry name" value="DUF1846_C"/>
</dbReference>
<dbReference type="InterPro" id="IPR048496">
    <property type="entry name" value="DUF1846_N"/>
</dbReference>
<dbReference type="NCBIfam" id="NF010184">
    <property type="entry name" value="PRK13663.1"/>
    <property type="match status" value="1"/>
</dbReference>
<dbReference type="Pfam" id="PF08903">
    <property type="entry name" value="DUF1846"/>
    <property type="match status" value="1"/>
</dbReference>
<dbReference type="Pfam" id="PF20921">
    <property type="entry name" value="DUF1846_C"/>
    <property type="match status" value="1"/>
</dbReference>
<dbReference type="PIRSF" id="PIRSF033132">
    <property type="entry name" value="DUF1846"/>
    <property type="match status" value="1"/>
</dbReference>
<feature type="chain" id="PRO_1000199747" description="UPF0371 protein SPG_0310">
    <location>
        <begin position="1"/>
        <end position="494"/>
    </location>
</feature>
<evidence type="ECO:0000255" key="1">
    <source>
        <dbReference type="HAMAP-Rule" id="MF_01567"/>
    </source>
</evidence>
<organism>
    <name type="scientific">Streptococcus pneumoniae serotype 19F (strain G54)</name>
    <dbReference type="NCBI Taxonomy" id="512566"/>
    <lineage>
        <taxon>Bacteria</taxon>
        <taxon>Bacillati</taxon>
        <taxon>Bacillota</taxon>
        <taxon>Bacilli</taxon>
        <taxon>Lactobacillales</taxon>
        <taxon>Streptococcaceae</taxon>
        <taxon>Streptococcus</taxon>
    </lineage>
</organism>
<proteinExistence type="inferred from homology"/>